<reference key="1">
    <citation type="submission" date="2008-02" db="EMBL/GenBank/DDBJ databases">
        <title>Complete sequence of Shewanella woodyi ATCC 51908.</title>
        <authorList>
            <consortium name="US DOE Joint Genome Institute"/>
            <person name="Copeland A."/>
            <person name="Lucas S."/>
            <person name="Lapidus A."/>
            <person name="Glavina del Rio T."/>
            <person name="Dalin E."/>
            <person name="Tice H."/>
            <person name="Bruce D."/>
            <person name="Goodwin L."/>
            <person name="Pitluck S."/>
            <person name="Sims D."/>
            <person name="Brettin T."/>
            <person name="Detter J.C."/>
            <person name="Han C."/>
            <person name="Kuske C.R."/>
            <person name="Schmutz J."/>
            <person name="Larimer F."/>
            <person name="Land M."/>
            <person name="Hauser L."/>
            <person name="Kyrpides N."/>
            <person name="Lykidis A."/>
            <person name="Zhao J.-S."/>
            <person name="Richardson P."/>
        </authorList>
    </citation>
    <scope>NUCLEOTIDE SEQUENCE [LARGE SCALE GENOMIC DNA]</scope>
    <source>
        <strain>ATCC 51908 / MS32</strain>
    </source>
</reference>
<sequence>MYNENPIKRRASTRIYVGDVPIGDGAPIAVQSMTNTLTTDVDATVAQIRALENVGADIVRVSVPTMDAAEAFKLIKQQTNIPLIADIHFDYRIALKVAEYGVDCLRINPGNIGNESRIKSVVECARDKNIPIRIGINGGSLEKDLMDKYKEPTPEALLESAMRHVDILDRLNFDQFKVSVKASDVFLAVEAYRLLAKQIVQPLHLGITEAGGLRSGSVKSSVGLGMLLAEGIGDTLRISLAADPVEEIKVGFDILKSLRIRSRGINFIACPSCSRQEFDVINTVNELERRLEDVITPMDVSIIGCVVNGPGEALVSDIGLTGGNRKSGYFDDGVRQKERFDNDNIVDSLEAKIRAKASIINGRIPVQDLNK</sequence>
<gene>
    <name evidence="1" type="primary">ispG</name>
    <name type="ordered locus">Swoo_1544</name>
</gene>
<keyword id="KW-0004">4Fe-4S</keyword>
<keyword id="KW-0408">Iron</keyword>
<keyword id="KW-0411">Iron-sulfur</keyword>
<keyword id="KW-0414">Isoprene biosynthesis</keyword>
<keyword id="KW-0479">Metal-binding</keyword>
<keyword id="KW-0560">Oxidoreductase</keyword>
<keyword id="KW-1185">Reference proteome</keyword>
<accession>B1KKJ2</accession>
<dbReference type="EC" id="1.17.7.3" evidence="1"/>
<dbReference type="EMBL" id="CP000961">
    <property type="protein sequence ID" value="ACA85832.1"/>
    <property type="molecule type" value="Genomic_DNA"/>
</dbReference>
<dbReference type="RefSeq" id="WP_012324178.1">
    <property type="nucleotide sequence ID" value="NC_010506.1"/>
</dbReference>
<dbReference type="SMR" id="B1KKJ2"/>
<dbReference type="STRING" id="392500.Swoo_1544"/>
<dbReference type="KEGG" id="swd:Swoo_1544"/>
<dbReference type="eggNOG" id="COG0821">
    <property type="taxonomic scope" value="Bacteria"/>
</dbReference>
<dbReference type="HOGENOM" id="CLU_042258_0_0_6"/>
<dbReference type="UniPathway" id="UPA00056">
    <property type="reaction ID" value="UER00096"/>
</dbReference>
<dbReference type="Proteomes" id="UP000002168">
    <property type="component" value="Chromosome"/>
</dbReference>
<dbReference type="GO" id="GO:0051539">
    <property type="term" value="F:4 iron, 4 sulfur cluster binding"/>
    <property type="evidence" value="ECO:0007669"/>
    <property type="project" value="UniProtKB-UniRule"/>
</dbReference>
<dbReference type="GO" id="GO:0046429">
    <property type="term" value="F:4-hydroxy-3-methylbut-2-en-1-yl diphosphate synthase activity (ferredoxin)"/>
    <property type="evidence" value="ECO:0007669"/>
    <property type="project" value="UniProtKB-UniRule"/>
</dbReference>
<dbReference type="GO" id="GO:0141197">
    <property type="term" value="F:4-hydroxy-3-methylbut-2-enyl-diphosphate synthase activity (flavodoxin)"/>
    <property type="evidence" value="ECO:0007669"/>
    <property type="project" value="UniProtKB-EC"/>
</dbReference>
<dbReference type="GO" id="GO:0005506">
    <property type="term" value="F:iron ion binding"/>
    <property type="evidence" value="ECO:0007669"/>
    <property type="project" value="InterPro"/>
</dbReference>
<dbReference type="GO" id="GO:0019288">
    <property type="term" value="P:isopentenyl diphosphate biosynthetic process, methylerythritol 4-phosphate pathway"/>
    <property type="evidence" value="ECO:0007669"/>
    <property type="project" value="UniProtKB-UniRule"/>
</dbReference>
<dbReference type="GO" id="GO:0016114">
    <property type="term" value="P:terpenoid biosynthetic process"/>
    <property type="evidence" value="ECO:0007669"/>
    <property type="project" value="InterPro"/>
</dbReference>
<dbReference type="FunFam" id="3.20.20.20:FF:000001">
    <property type="entry name" value="4-hydroxy-3-methylbut-2-en-1-yl diphosphate synthase (flavodoxin)"/>
    <property type="match status" value="1"/>
</dbReference>
<dbReference type="FunFam" id="3.30.413.10:FF:000002">
    <property type="entry name" value="4-hydroxy-3-methylbut-2-en-1-yl diphosphate synthase (flavodoxin)"/>
    <property type="match status" value="1"/>
</dbReference>
<dbReference type="Gene3D" id="3.20.20.20">
    <property type="entry name" value="Dihydropteroate synthase-like"/>
    <property type="match status" value="1"/>
</dbReference>
<dbReference type="Gene3D" id="3.30.413.10">
    <property type="entry name" value="Sulfite Reductase Hemoprotein, domain 1"/>
    <property type="match status" value="1"/>
</dbReference>
<dbReference type="HAMAP" id="MF_00159">
    <property type="entry name" value="IspG"/>
    <property type="match status" value="1"/>
</dbReference>
<dbReference type="InterPro" id="IPR011005">
    <property type="entry name" value="Dihydropteroate_synth-like_sf"/>
</dbReference>
<dbReference type="InterPro" id="IPR016425">
    <property type="entry name" value="IspG_bac"/>
</dbReference>
<dbReference type="InterPro" id="IPR004588">
    <property type="entry name" value="IspG_bac-typ"/>
</dbReference>
<dbReference type="InterPro" id="IPR045854">
    <property type="entry name" value="NO2/SO3_Rdtase_4Fe4S_sf"/>
</dbReference>
<dbReference type="NCBIfam" id="TIGR00612">
    <property type="entry name" value="ispG_gcpE"/>
    <property type="match status" value="1"/>
</dbReference>
<dbReference type="NCBIfam" id="NF001540">
    <property type="entry name" value="PRK00366.1"/>
    <property type="match status" value="1"/>
</dbReference>
<dbReference type="PANTHER" id="PTHR30454">
    <property type="entry name" value="4-HYDROXY-3-METHYLBUT-2-EN-1-YL DIPHOSPHATE SYNTHASE"/>
    <property type="match status" value="1"/>
</dbReference>
<dbReference type="PANTHER" id="PTHR30454:SF0">
    <property type="entry name" value="4-HYDROXY-3-METHYLBUT-2-EN-1-YL DIPHOSPHATE SYNTHASE (FERREDOXIN), CHLOROPLASTIC"/>
    <property type="match status" value="1"/>
</dbReference>
<dbReference type="Pfam" id="PF04551">
    <property type="entry name" value="GcpE"/>
    <property type="match status" value="1"/>
</dbReference>
<dbReference type="PIRSF" id="PIRSF004640">
    <property type="entry name" value="IspG"/>
    <property type="match status" value="1"/>
</dbReference>
<dbReference type="SUPFAM" id="SSF51717">
    <property type="entry name" value="Dihydropteroate synthetase-like"/>
    <property type="match status" value="1"/>
</dbReference>
<dbReference type="SUPFAM" id="SSF56014">
    <property type="entry name" value="Nitrite and sulphite reductase 4Fe-4S domain-like"/>
    <property type="match status" value="1"/>
</dbReference>
<evidence type="ECO:0000255" key="1">
    <source>
        <dbReference type="HAMAP-Rule" id="MF_00159"/>
    </source>
</evidence>
<comment type="function">
    <text evidence="1">Converts 2C-methyl-D-erythritol 2,4-cyclodiphosphate (ME-2,4cPP) into 1-hydroxy-2-methyl-2-(E)-butenyl 4-diphosphate.</text>
</comment>
<comment type="catalytic activity">
    <reaction evidence="1">
        <text>(2E)-4-hydroxy-3-methylbut-2-enyl diphosphate + oxidized [flavodoxin] + H2O + 2 H(+) = 2-C-methyl-D-erythritol 2,4-cyclic diphosphate + reduced [flavodoxin]</text>
        <dbReference type="Rhea" id="RHEA:43604"/>
        <dbReference type="Rhea" id="RHEA-COMP:10622"/>
        <dbReference type="Rhea" id="RHEA-COMP:10623"/>
        <dbReference type="ChEBI" id="CHEBI:15377"/>
        <dbReference type="ChEBI" id="CHEBI:15378"/>
        <dbReference type="ChEBI" id="CHEBI:57618"/>
        <dbReference type="ChEBI" id="CHEBI:58210"/>
        <dbReference type="ChEBI" id="CHEBI:58483"/>
        <dbReference type="ChEBI" id="CHEBI:128753"/>
        <dbReference type="EC" id="1.17.7.3"/>
    </reaction>
</comment>
<comment type="cofactor">
    <cofactor evidence="1">
        <name>[4Fe-4S] cluster</name>
        <dbReference type="ChEBI" id="CHEBI:49883"/>
    </cofactor>
    <text evidence="1">Binds 1 [4Fe-4S] cluster.</text>
</comment>
<comment type="pathway">
    <text evidence="1">Isoprenoid biosynthesis; isopentenyl diphosphate biosynthesis via DXP pathway; isopentenyl diphosphate from 1-deoxy-D-xylulose 5-phosphate: step 5/6.</text>
</comment>
<comment type="similarity">
    <text evidence="1">Belongs to the IspG family.</text>
</comment>
<proteinExistence type="inferred from homology"/>
<organism>
    <name type="scientific">Shewanella woodyi (strain ATCC 51908 / MS32)</name>
    <dbReference type="NCBI Taxonomy" id="392500"/>
    <lineage>
        <taxon>Bacteria</taxon>
        <taxon>Pseudomonadati</taxon>
        <taxon>Pseudomonadota</taxon>
        <taxon>Gammaproteobacteria</taxon>
        <taxon>Alteromonadales</taxon>
        <taxon>Shewanellaceae</taxon>
        <taxon>Shewanella</taxon>
    </lineage>
</organism>
<feature type="chain" id="PRO_1000097186" description="4-hydroxy-3-methylbut-2-en-1-yl diphosphate synthase (flavodoxin)">
    <location>
        <begin position="1"/>
        <end position="371"/>
    </location>
</feature>
<feature type="binding site" evidence="1">
    <location>
        <position position="270"/>
    </location>
    <ligand>
        <name>[4Fe-4S] cluster</name>
        <dbReference type="ChEBI" id="CHEBI:49883"/>
    </ligand>
</feature>
<feature type="binding site" evidence="1">
    <location>
        <position position="273"/>
    </location>
    <ligand>
        <name>[4Fe-4S] cluster</name>
        <dbReference type="ChEBI" id="CHEBI:49883"/>
    </ligand>
</feature>
<feature type="binding site" evidence="1">
    <location>
        <position position="305"/>
    </location>
    <ligand>
        <name>[4Fe-4S] cluster</name>
        <dbReference type="ChEBI" id="CHEBI:49883"/>
    </ligand>
</feature>
<feature type="binding site" evidence="1">
    <location>
        <position position="312"/>
    </location>
    <ligand>
        <name>[4Fe-4S] cluster</name>
        <dbReference type="ChEBI" id="CHEBI:49883"/>
    </ligand>
</feature>
<name>ISPG_SHEWM</name>
<protein>
    <recommendedName>
        <fullName evidence="1">4-hydroxy-3-methylbut-2-en-1-yl diphosphate synthase (flavodoxin)</fullName>
        <ecNumber evidence="1">1.17.7.3</ecNumber>
    </recommendedName>
    <alternativeName>
        <fullName evidence="1">1-hydroxy-2-methyl-2-(E)-butenyl 4-diphosphate synthase</fullName>
    </alternativeName>
</protein>